<comment type="function">
    <text evidence="1">DNA ligase that catalyzes the formation of phosphodiester linkages between 5'-phosphoryl and 3'-hydroxyl groups in double-stranded DNA using NAD as a coenzyme and as the energy source for the reaction. It is essential for DNA replication and repair of damaged DNA.</text>
</comment>
<comment type="catalytic activity">
    <reaction evidence="1">
        <text>NAD(+) + (deoxyribonucleotide)n-3'-hydroxyl + 5'-phospho-(deoxyribonucleotide)m = (deoxyribonucleotide)n+m + AMP + beta-nicotinamide D-nucleotide.</text>
        <dbReference type="EC" id="6.5.1.2"/>
    </reaction>
</comment>
<comment type="cofactor">
    <cofactor evidence="1">
        <name>Mg(2+)</name>
        <dbReference type="ChEBI" id="CHEBI:18420"/>
    </cofactor>
    <cofactor evidence="1">
        <name>Mn(2+)</name>
        <dbReference type="ChEBI" id="CHEBI:29035"/>
    </cofactor>
</comment>
<comment type="similarity">
    <text evidence="1">Belongs to the NAD-dependent DNA ligase family. LigA subfamily.</text>
</comment>
<organism>
    <name type="scientific">Burkholderia mallei (strain NCTC 10229)</name>
    <dbReference type="NCBI Taxonomy" id="412022"/>
    <lineage>
        <taxon>Bacteria</taxon>
        <taxon>Pseudomonadati</taxon>
        <taxon>Pseudomonadota</taxon>
        <taxon>Betaproteobacteria</taxon>
        <taxon>Burkholderiales</taxon>
        <taxon>Burkholderiaceae</taxon>
        <taxon>Burkholderia</taxon>
        <taxon>pseudomallei group</taxon>
    </lineage>
</organism>
<gene>
    <name evidence="1" type="primary">ligA</name>
    <name type="ordered locus">BMA10229_A3249</name>
</gene>
<feature type="chain" id="PRO_0000313162" description="DNA ligase">
    <location>
        <begin position="1"/>
        <end position="691"/>
    </location>
</feature>
<feature type="domain" description="BRCT" evidence="1">
    <location>
        <begin position="610"/>
        <end position="691"/>
    </location>
</feature>
<feature type="active site" description="N6-AMP-lysine intermediate" evidence="1">
    <location>
        <position position="132"/>
    </location>
</feature>
<feature type="binding site" evidence="1">
    <location>
        <begin position="41"/>
        <end position="45"/>
    </location>
    <ligand>
        <name>NAD(+)</name>
        <dbReference type="ChEBI" id="CHEBI:57540"/>
    </ligand>
</feature>
<feature type="binding site" evidence="1">
    <location>
        <begin position="90"/>
        <end position="91"/>
    </location>
    <ligand>
        <name>NAD(+)</name>
        <dbReference type="ChEBI" id="CHEBI:57540"/>
    </ligand>
</feature>
<feature type="binding site" evidence="1">
    <location>
        <position position="130"/>
    </location>
    <ligand>
        <name>NAD(+)</name>
        <dbReference type="ChEBI" id="CHEBI:57540"/>
    </ligand>
</feature>
<feature type="binding site" evidence="1">
    <location>
        <position position="153"/>
    </location>
    <ligand>
        <name>NAD(+)</name>
        <dbReference type="ChEBI" id="CHEBI:57540"/>
    </ligand>
</feature>
<feature type="binding site" evidence="1">
    <location>
        <position position="190"/>
    </location>
    <ligand>
        <name>NAD(+)</name>
        <dbReference type="ChEBI" id="CHEBI:57540"/>
    </ligand>
</feature>
<feature type="binding site" evidence="1">
    <location>
        <position position="307"/>
    </location>
    <ligand>
        <name>NAD(+)</name>
        <dbReference type="ChEBI" id="CHEBI:57540"/>
    </ligand>
</feature>
<feature type="binding site" evidence="1">
    <location>
        <position position="331"/>
    </location>
    <ligand>
        <name>NAD(+)</name>
        <dbReference type="ChEBI" id="CHEBI:57540"/>
    </ligand>
</feature>
<feature type="binding site" evidence="1">
    <location>
        <position position="425"/>
    </location>
    <ligand>
        <name>Zn(2+)</name>
        <dbReference type="ChEBI" id="CHEBI:29105"/>
    </ligand>
</feature>
<feature type="binding site" evidence="1">
    <location>
        <position position="428"/>
    </location>
    <ligand>
        <name>Zn(2+)</name>
        <dbReference type="ChEBI" id="CHEBI:29105"/>
    </ligand>
</feature>
<feature type="binding site" evidence="1">
    <location>
        <position position="443"/>
    </location>
    <ligand>
        <name>Zn(2+)</name>
        <dbReference type="ChEBI" id="CHEBI:29105"/>
    </ligand>
</feature>
<feature type="binding site" evidence="1">
    <location>
        <position position="449"/>
    </location>
    <ligand>
        <name>Zn(2+)</name>
        <dbReference type="ChEBI" id="CHEBI:29105"/>
    </ligand>
</feature>
<keyword id="KW-0227">DNA damage</keyword>
<keyword id="KW-0234">DNA repair</keyword>
<keyword id="KW-0235">DNA replication</keyword>
<keyword id="KW-0436">Ligase</keyword>
<keyword id="KW-0460">Magnesium</keyword>
<keyword id="KW-0464">Manganese</keyword>
<keyword id="KW-0479">Metal-binding</keyword>
<keyword id="KW-0520">NAD</keyword>
<keyword id="KW-0862">Zinc</keyword>
<name>DNLJ_BURM9</name>
<dbReference type="EC" id="6.5.1.2" evidence="1"/>
<dbReference type="EMBL" id="CP000546">
    <property type="protein sequence ID" value="ABN02424.1"/>
    <property type="molecule type" value="Genomic_DNA"/>
</dbReference>
<dbReference type="RefSeq" id="WP_004192539.1">
    <property type="nucleotide sequence ID" value="NC_008836.1"/>
</dbReference>
<dbReference type="SMR" id="A2SB66"/>
<dbReference type="GeneID" id="92979286"/>
<dbReference type="KEGG" id="bml:BMA10229_A3249"/>
<dbReference type="HOGENOM" id="CLU_007764_2_1_4"/>
<dbReference type="Proteomes" id="UP000002283">
    <property type="component" value="Chromosome I"/>
</dbReference>
<dbReference type="GO" id="GO:0005829">
    <property type="term" value="C:cytosol"/>
    <property type="evidence" value="ECO:0007669"/>
    <property type="project" value="TreeGrafter"/>
</dbReference>
<dbReference type="GO" id="GO:0003677">
    <property type="term" value="F:DNA binding"/>
    <property type="evidence" value="ECO:0007669"/>
    <property type="project" value="InterPro"/>
</dbReference>
<dbReference type="GO" id="GO:0003911">
    <property type="term" value="F:DNA ligase (NAD+) activity"/>
    <property type="evidence" value="ECO:0007669"/>
    <property type="project" value="UniProtKB-UniRule"/>
</dbReference>
<dbReference type="GO" id="GO:0046872">
    <property type="term" value="F:metal ion binding"/>
    <property type="evidence" value="ECO:0007669"/>
    <property type="project" value="UniProtKB-KW"/>
</dbReference>
<dbReference type="GO" id="GO:0006281">
    <property type="term" value="P:DNA repair"/>
    <property type="evidence" value="ECO:0007669"/>
    <property type="project" value="UniProtKB-KW"/>
</dbReference>
<dbReference type="GO" id="GO:0006260">
    <property type="term" value="P:DNA replication"/>
    <property type="evidence" value="ECO:0007669"/>
    <property type="project" value="UniProtKB-KW"/>
</dbReference>
<dbReference type="CDD" id="cd17748">
    <property type="entry name" value="BRCT_DNA_ligase_like"/>
    <property type="match status" value="1"/>
</dbReference>
<dbReference type="CDD" id="cd00114">
    <property type="entry name" value="LIGANc"/>
    <property type="match status" value="1"/>
</dbReference>
<dbReference type="FunFam" id="1.10.150.20:FF:000006">
    <property type="entry name" value="DNA ligase"/>
    <property type="match status" value="1"/>
</dbReference>
<dbReference type="FunFam" id="1.10.150.20:FF:000007">
    <property type="entry name" value="DNA ligase"/>
    <property type="match status" value="1"/>
</dbReference>
<dbReference type="FunFam" id="1.10.287.610:FF:000002">
    <property type="entry name" value="DNA ligase"/>
    <property type="match status" value="1"/>
</dbReference>
<dbReference type="FunFam" id="2.40.50.140:FF:000012">
    <property type="entry name" value="DNA ligase"/>
    <property type="match status" value="1"/>
</dbReference>
<dbReference type="FunFam" id="3.30.470.30:FF:000001">
    <property type="entry name" value="DNA ligase"/>
    <property type="match status" value="1"/>
</dbReference>
<dbReference type="FunFam" id="3.40.50.10190:FF:000054">
    <property type="entry name" value="DNA ligase"/>
    <property type="match status" value="1"/>
</dbReference>
<dbReference type="Gene3D" id="6.20.10.30">
    <property type="match status" value="1"/>
</dbReference>
<dbReference type="Gene3D" id="1.10.150.20">
    <property type="entry name" value="5' to 3' exonuclease, C-terminal subdomain"/>
    <property type="match status" value="2"/>
</dbReference>
<dbReference type="Gene3D" id="3.40.50.10190">
    <property type="entry name" value="BRCT domain"/>
    <property type="match status" value="1"/>
</dbReference>
<dbReference type="Gene3D" id="3.30.470.30">
    <property type="entry name" value="DNA ligase/mRNA capping enzyme"/>
    <property type="match status" value="1"/>
</dbReference>
<dbReference type="Gene3D" id="1.10.287.610">
    <property type="entry name" value="Helix hairpin bin"/>
    <property type="match status" value="1"/>
</dbReference>
<dbReference type="Gene3D" id="2.40.50.140">
    <property type="entry name" value="Nucleic acid-binding proteins"/>
    <property type="match status" value="1"/>
</dbReference>
<dbReference type="HAMAP" id="MF_01588">
    <property type="entry name" value="DNA_ligase_A"/>
    <property type="match status" value="1"/>
</dbReference>
<dbReference type="InterPro" id="IPR001357">
    <property type="entry name" value="BRCT_dom"/>
</dbReference>
<dbReference type="InterPro" id="IPR036420">
    <property type="entry name" value="BRCT_dom_sf"/>
</dbReference>
<dbReference type="InterPro" id="IPR041663">
    <property type="entry name" value="DisA/LigA_HHH"/>
</dbReference>
<dbReference type="InterPro" id="IPR001679">
    <property type="entry name" value="DNA_ligase"/>
</dbReference>
<dbReference type="InterPro" id="IPR018239">
    <property type="entry name" value="DNA_ligase_AS"/>
</dbReference>
<dbReference type="InterPro" id="IPR033136">
    <property type="entry name" value="DNA_ligase_CS"/>
</dbReference>
<dbReference type="InterPro" id="IPR013839">
    <property type="entry name" value="DNAligase_adenylation"/>
</dbReference>
<dbReference type="InterPro" id="IPR013840">
    <property type="entry name" value="DNAligase_N"/>
</dbReference>
<dbReference type="InterPro" id="IPR003583">
    <property type="entry name" value="Hlx-hairpin-Hlx_DNA-bd_motif"/>
</dbReference>
<dbReference type="InterPro" id="IPR012340">
    <property type="entry name" value="NA-bd_OB-fold"/>
</dbReference>
<dbReference type="InterPro" id="IPR004150">
    <property type="entry name" value="NAD_DNA_ligase_OB"/>
</dbReference>
<dbReference type="InterPro" id="IPR010994">
    <property type="entry name" value="RuvA_2-like"/>
</dbReference>
<dbReference type="InterPro" id="IPR004149">
    <property type="entry name" value="Znf_DNAligase_C4"/>
</dbReference>
<dbReference type="NCBIfam" id="TIGR00575">
    <property type="entry name" value="dnlj"/>
    <property type="match status" value="1"/>
</dbReference>
<dbReference type="NCBIfam" id="NF005932">
    <property type="entry name" value="PRK07956.1"/>
    <property type="match status" value="1"/>
</dbReference>
<dbReference type="PANTHER" id="PTHR23389">
    <property type="entry name" value="CHROMOSOME TRANSMISSION FIDELITY FACTOR 18"/>
    <property type="match status" value="1"/>
</dbReference>
<dbReference type="PANTHER" id="PTHR23389:SF9">
    <property type="entry name" value="DNA LIGASE"/>
    <property type="match status" value="1"/>
</dbReference>
<dbReference type="Pfam" id="PF00533">
    <property type="entry name" value="BRCT"/>
    <property type="match status" value="1"/>
</dbReference>
<dbReference type="Pfam" id="PF01653">
    <property type="entry name" value="DNA_ligase_aden"/>
    <property type="match status" value="1"/>
</dbReference>
<dbReference type="Pfam" id="PF03120">
    <property type="entry name" value="DNA_ligase_OB"/>
    <property type="match status" value="1"/>
</dbReference>
<dbReference type="Pfam" id="PF03119">
    <property type="entry name" value="DNA_ligase_ZBD"/>
    <property type="match status" value="1"/>
</dbReference>
<dbReference type="Pfam" id="PF12826">
    <property type="entry name" value="HHH_2"/>
    <property type="match status" value="1"/>
</dbReference>
<dbReference type="Pfam" id="PF14520">
    <property type="entry name" value="HHH_5"/>
    <property type="match status" value="1"/>
</dbReference>
<dbReference type="Pfam" id="PF22745">
    <property type="entry name" value="Nlig-Ia"/>
    <property type="match status" value="1"/>
</dbReference>
<dbReference type="PIRSF" id="PIRSF001604">
    <property type="entry name" value="LigA"/>
    <property type="match status" value="1"/>
</dbReference>
<dbReference type="SMART" id="SM00292">
    <property type="entry name" value="BRCT"/>
    <property type="match status" value="1"/>
</dbReference>
<dbReference type="SMART" id="SM00278">
    <property type="entry name" value="HhH1"/>
    <property type="match status" value="4"/>
</dbReference>
<dbReference type="SMART" id="SM00532">
    <property type="entry name" value="LIGANc"/>
    <property type="match status" value="1"/>
</dbReference>
<dbReference type="SUPFAM" id="SSF52113">
    <property type="entry name" value="BRCT domain"/>
    <property type="match status" value="1"/>
</dbReference>
<dbReference type="SUPFAM" id="SSF56091">
    <property type="entry name" value="DNA ligase/mRNA capping enzyme, catalytic domain"/>
    <property type="match status" value="1"/>
</dbReference>
<dbReference type="SUPFAM" id="SSF50249">
    <property type="entry name" value="Nucleic acid-binding proteins"/>
    <property type="match status" value="1"/>
</dbReference>
<dbReference type="SUPFAM" id="SSF47781">
    <property type="entry name" value="RuvA domain 2-like"/>
    <property type="match status" value="1"/>
</dbReference>
<dbReference type="PROSITE" id="PS50172">
    <property type="entry name" value="BRCT"/>
    <property type="match status" value="1"/>
</dbReference>
<dbReference type="PROSITE" id="PS01055">
    <property type="entry name" value="DNA_LIGASE_N1"/>
    <property type="match status" value="1"/>
</dbReference>
<dbReference type="PROSITE" id="PS01056">
    <property type="entry name" value="DNA_LIGASE_N2"/>
    <property type="match status" value="1"/>
</dbReference>
<proteinExistence type="inferred from homology"/>
<evidence type="ECO:0000255" key="1">
    <source>
        <dbReference type="HAMAP-Rule" id="MF_01588"/>
    </source>
</evidence>
<accession>A2SB66</accession>
<protein>
    <recommendedName>
        <fullName evidence="1">DNA ligase</fullName>
        <ecNumber evidence="1">6.5.1.2</ecNumber>
    </recommendedName>
    <alternativeName>
        <fullName evidence="1">Polydeoxyribonucleotide synthase [NAD(+)]</fullName>
    </alternativeName>
</protein>
<reference key="1">
    <citation type="journal article" date="2010" name="Genome Biol. Evol.">
        <title>Continuing evolution of Burkholderia mallei through genome reduction and large-scale rearrangements.</title>
        <authorList>
            <person name="Losada L."/>
            <person name="Ronning C.M."/>
            <person name="DeShazer D."/>
            <person name="Woods D."/>
            <person name="Fedorova N."/>
            <person name="Kim H.S."/>
            <person name="Shabalina S.A."/>
            <person name="Pearson T.R."/>
            <person name="Brinkac L."/>
            <person name="Tan P."/>
            <person name="Nandi T."/>
            <person name="Crabtree J."/>
            <person name="Badger J."/>
            <person name="Beckstrom-Sternberg S."/>
            <person name="Saqib M."/>
            <person name="Schutzer S.E."/>
            <person name="Keim P."/>
            <person name="Nierman W.C."/>
        </authorList>
    </citation>
    <scope>NUCLEOTIDE SEQUENCE [LARGE SCALE GENOMIC DNA]</scope>
    <source>
        <strain>NCTC 10229</strain>
    </source>
</reference>
<sequence length="691" mass="75584">MARSPVEPPASQPAKRAAWLRAELERANYAYYVLDQPDLPDAEYDRLFVELQRIEAEHPDLVTPDSPTQRVGGEAASGFTPVVHDKPMLSLNNGFADEDVIAFDKRVADGLDKATDLAGTVTEPVEYACELKFDGLAISLRYENGRFVQASTRGDGTTGEDVTENIRTIRAIPLTLKGKRIPRMLDVRGEVLMFKRDFARLNERQRAAGQREFANPRNAAAGSLRQLDSKITASRPLSFFAYGIGVLDGADMPDTHSGLLDWYETLGLPVNRERAVVRGAAGLLAFFHSVGERRESLPYDIDGVVYKVNRRDEQDRLGFVSRAPRFALAHKFPAQEALTKLTAIDVQVGRTGAITPVARLEPVFVGGATVTNATLHNEDEVRRKDIRIGDTVIVRRAGDVIPEVVSAVLDRRPADAQEFVMPTECPECGSRIERLPDEAIARCTGGLFCPAQRKQALWHFAQRRALDIDGLGEKIIDQLVEQNLVRTPADLFNLGFSTLVALDRFAEKSARNLIDSLEKAKHTTLARFIYALGIRHVGESTAKDLAKHFGSLDPIMDAPIDALLEVNDVGPIVAESIHQFFAEEHNRTVIEQLRARGKVTWPEGPPAPRAPQGVLAGKTVVLTGTLPTLTREAAKEMLEAAGAKVAGSVSKKTDYVVAGADAGSKLAKAEELGIPVLDEAGMHTLLEGHAR</sequence>